<dbReference type="EC" id="1.7.7.1"/>
<dbReference type="EMBL" id="X74949">
    <property type="protein sequence ID" value="CAA52905.1"/>
    <property type="molecule type" value="mRNA"/>
</dbReference>
<dbReference type="PIR" id="S46311">
    <property type="entry name" value="S46311"/>
</dbReference>
<dbReference type="SMR" id="Q43090"/>
<dbReference type="UniPathway" id="UPA00653"/>
<dbReference type="GO" id="GO:0009507">
    <property type="term" value="C:chloroplast"/>
    <property type="evidence" value="ECO:0007669"/>
    <property type="project" value="UniProtKB-SubCell"/>
</dbReference>
<dbReference type="GO" id="GO:0051539">
    <property type="term" value="F:4 iron, 4 sulfur cluster binding"/>
    <property type="evidence" value="ECO:0007669"/>
    <property type="project" value="UniProtKB-KW"/>
</dbReference>
<dbReference type="GO" id="GO:0048307">
    <property type="term" value="F:ferredoxin-nitrite reductase activity"/>
    <property type="evidence" value="ECO:0007669"/>
    <property type="project" value="UniProtKB-EC"/>
</dbReference>
<dbReference type="GO" id="GO:0020037">
    <property type="term" value="F:heme binding"/>
    <property type="evidence" value="ECO:0007669"/>
    <property type="project" value="InterPro"/>
</dbReference>
<dbReference type="GO" id="GO:0046872">
    <property type="term" value="F:metal ion binding"/>
    <property type="evidence" value="ECO:0007669"/>
    <property type="project" value="UniProtKB-KW"/>
</dbReference>
<dbReference type="GO" id="GO:0042128">
    <property type="term" value="P:nitrate assimilation"/>
    <property type="evidence" value="ECO:0007669"/>
    <property type="project" value="UniProtKB-UniPathway"/>
</dbReference>
<dbReference type="Gene3D" id="3.30.413.10">
    <property type="entry name" value="Sulfite Reductase Hemoprotein, domain 1"/>
    <property type="match status" value="1"/>
</dbReference>
<dbReference type="InterPro" id="IPR051329">
    <property type="entry name" value="NIR_SIR_4Fe-4S"/>
</dbReference>
<dbReference type="InterPro" id="IPR006067">
    <property type="entry name" value="NO2/SO3_Rdtase_4Fe4S_dom"/>
</dbReference>
<dbReference type="InterPro" id="IPR045854">
    <property type="entry name" value="NO2/SO3_Rdtase_4Fe4S_sf"/>
</dbReference>
<dbReference type="InterPro" id="IPR006066">
    <property type="entry name" value="NO2/SO3_Rdtase_FeS/sirohaem_BS"/>
</dbReference>
<dbReference type="PANTHER" id="PTHR32439">
    <property type="entry name" value="FERREDOXIN--NITRITE REDUCTASE, CHLOROPLASTIC"/>
    <property type="match status" value="1"/>
</dbReference>
<dbReference type="PANTHER" id="PTHR32439:SF0">
    <property type="entry name" value="FERREDOXIN--NITRITE REDUCTASE, CHLOROPLASTIC"/>
    <property type="match status" value="1"/>
</dbReference>
<dbReference type="Pfam" id="PF01077">
    <property type="entry name" value="NIR_SIR"/>
    <property type="match status" value="1"/>
</dbReference>
<dbReference type="SUPFAM" id="SSF56014">
    <property type="entry name" value="Nitrite and sulphite reductase 4Fe-4S domain-like"/>
    <property type="match status" value="1"/>
</dbReference>
<dbReference type="PROSITE" id="PS00365">
    <property type="entry name" value="NIR_SIR"/>
    <property type="match status" value="1"/>
</dbReference>
<evidence type="ECO:0000250" key="1"/>
<evidence type="ECO:0000269" key="2">
    <source>
    </source>
</evidence>
<evidence type="ECO:0000305" key="3"/>
<keyword id="KW-0004">4Fe-4S</keyword>
<keyword id="KW-0150">Chloroplast</keyword>
<keyword id="KW-0349">Heme</keyword>
<keyword id="KW-0408">Iron</keyword>
<keyword id="KW-0411">Iron-sulfur</keyword>
<keyword id="KW-0479">Metal-binding</keyword>
<keyword id="KW-0534">Nitrate assimilation</keyword>
<keyword id="KW-0560">Oxidoreductase</keyword>
<keyword id="KW-0934">Plastid</keyword>
<organism>
    <name type="scientific">Pinus sylvestris</name>
    <name type="common">Scotch pine</name>
    <dbReference type="NCBI Taxonomy" id="3349"/>
    <lineage>
        <taxon>Eukaryota</taxon>
        <taxon>Viridiplantae</taxon>
        <taxon>Streptophyta</taxon>
        <taxon>Embryophyta</taxon>
        <taxon>Tracheophyta</taxon>
        <taxon>Spermatophyta</taxon>
        <taxon>Pinopsida</taxon>
        <taxon>Pinidae</taxon>
        <taxon>Conifers I</taxon>
        <taxon>Pinales</taxon>
        <taxon>Pinaceae</taxon>
        <taxon>Pinus</taxon>
        <taxon>Pinus subgen. Pinus</taxon>
    </lineage>
</organism>
<accession>Q43090</accession>
<feature type="chain" id="PRO_0000199955" description="Ferredoxin--nitrite reductase, chloroplastic">
    <location>
        <begin position="1" status="less than"/>
        <end position="105"/>
    </location>
</feature>
<feature type="binding site" evidence="1">
    <location>
        <position position="28"/>
    </location>
    <ligand>
        <name>[4Fe-4S] cluster</name>
        <dbReference type="ChEBI" id="CHEBI:49883"/>
    </ligand>
</feature>
<feature type="binding site" evidence="1">
    <location>
        <position position="32"/>
    </location>
    <ligand>
        <name>[4Fe-4S] cluster</name>
        <dbReference type="ChEBI" id="CHEBI:49883"/>
    </ligand>
</feature>
<feature type="binding site" description="axial binding residue" evidence="1">
    <location>
        <position position="32"/>
    </location>
    <ligand>
        <name>siroheme</name>
        <dbReference type="ChEBI" id="CHEBI:60052"/>
    </ligand>
    <ligandPart>
        <name>Fe</name>
        <dbReference type="ChEBI" id="CHEBI:18248"/>
    </ligandPart>
</feature>
<feature type="non-terminal residue">
    <location>
        <position position="1"/>
    </location>
</feature>
<comment type="catalytic activity">
    <reaction>
        <text>6 oxidized [2Fe-2S]-[ferredoxin] + NH4(+) + 2 H2O = nitrite + 6 reduced [2Fe-2S]-[ferredoxin] + 8 H(+)</text>
        <dbReference type="Rhea" id="RHEA:18041"/>
        <dbReference type="Rhea" id="RHEA-COMP:10000"/>
        <dbReference type="Rhea" id="RHEA-COMP:10001"/>
        <dbReference type="ChEBI" id="CHEBI:15377"/>
        <dbReference type="ChEBI" id="CHEBI:15378"/>
        <dbReference type="ChEBI" id="CHEBI:16301"/>
        <dbReference type="ChEBI" id="CHEBI:28938"/>
        <dbReference type="ChEBI" id="CHEBI:33737"/>
        <dbReference type="ChEBI" id="CHEBI:33738"/>
        <dbReference type="EC" id="1.7.7.1"/>
    </reaction>
</comment>
<comment type="cofactor">
    <cofactor evidence="1">
        <name>siroheme</name>
        <dbReference type="ChEBI" id="CHEBI:60052"/>
    </cofactor>
    <text evidence="1">Binds 1 siroheme per subunit.</text>
</comment>
<comment type="cofactor">
    <cofactor evidence="1">
        <name>[4Fe-4S] cluster</name>
        <dbReference type="ChEBI" id="CHEBI:49883"/>
    </cofactor>
    <text evidence="1">Binds 1 [4Fe-4S] cluster per subunit.</text>
</comment>
<comment type="pathway">
    <text>Nitrogen metabolism; nitrate reduction (assimilation).</text>
</comment>
<comment type="subunit">
    <text evidence="1">Monomer.</text>
</comment>
<comment type="subcellular location">
    <subcellularLocation>
        <location evidence="1">Plastid</location>
        <location evidence="1">Chloroplast</location>
    </subcellularLocation>
</comment>
<comment type="tissue specificity">
    <text evidence="2">Highest expression in roots and hypocotyls. Some expression in cotyledonary whorls.</text>
</comment>
<comment type="induction">
    <text evidence="2">Strong induction by nitrate in roots and hypocotyls. Strong induction by light and weak induction by nitrate in cotyledonary whorls.</text>
</comment>
<comment type="similarity">
    <text evidence="3">Belongs to the nitrite and sulfite reductase 4Fe-4S domain family.</text>
</comment>
<protein>
    <recommendedName>
        <fullName>Ferredoxin--nitrite reductase, chloroplastic</fullName>
        <ecNumber>1.7.7.1</ecNumber>
    </recommendedName>
    <alternativeName>
        <fullName>PSNiR</fullName>
        <shortName>NiR</shortName>
    </alternativeName>
</protein>
<proteinExistence type="evidence at transcript level"/>
<gene>
    <name type="primary">NIR</name>
</gene>
<name>NIR_PINSY</name>
<sequence>KARALKITEELDRTMEVPKPVRMHWTGCPNTCAQVQVADIGFMGCMTRDENKKVVEGVDIFIGGRVGADSHLGDLIHKGVPCKDVVPVVQELLIKHFGAIRKTNM</sequence>
<reference key="1">
    <citation type="journal article" date="1994" name="Plant Mol. Biol.">
        <title>Gene expression of nitrite reductase in Scots pine (Pinus sylvestris L.) as affected by light and nitrate.</title>
        <authorList>
            <person name="Neininger A."/>
            <person name="Seith B."/>
            <person name="Hoch B."/>
            <person name="Mohr H."/>
        </authorList>
    </citation>
    <scope>NUCLEOTIDE SEQUENCE [MRNA]</scope>
    <scope>TISSUE SPECIFICITY</scope>
    <scope>INDUCTION</scope>
    <source>
        <strain>cv. Black forest provenance</strain>
    </source>
</reference>